<feature type="chain" id="PRO_1000019326" description="Coproporphyrin III ferrochelatase">
    <location>
        <begin position="1"/>
        <end position="340"/>
    </location>
</feature>
<feature type="binding site" evidence="1">
    <location>
        <position position="52"/>
    </location>
    <ligand>
        <name>Fe-coproporphyrin III</name>
        <dbReference type="ChEBI" id="CHEBI:68438"/>
    </ligand>
</feature>
<feature type="binding site" evidence="1">
    <location>
        <position position="116"/>
    </location>
    <ligand>
        <name>Fe-coproporphyrin III</name>
        <dbReference type="ChEBI" id="CHEBI:68438"/>
    </ligand>
</feature>
<feature type="binding site" evidence="1">
    <location>
        <position position="172"/>
    </location>
    <ligand>
        <name>Fe(2+)</name>
        <dbReference type="ChEBI" id="CHEBI:29033"/>
    </ligand>
</feature>
<feature type="binding site" evidence="1">
    <location>
        <position position="255"/>
    </location>
    <ligand>
        <name>Fe(2+)</name>
        <dbReference type="ChEBI" id="CHEBI:29033"/>
    </ligand>
</feature>
<gene>
    <name evidence="1" type="primary">cpfC</name>
    <name type="ordered locus">MUL_1493</name>
</gene>
<reference key="1">
    <citation type="journal article" date="2007" name="Genome Res.">
        <title>Reductive evolution and niche adaptation inferred from the genome of Mycobacterium ulcerans, the causative agent of Buruli ulcer.</title>
        <authorList>
            <person name="Stinear T.P."/>
            <person name="Seemann T."/>
            <person name="Pidot S."/>
            <person name="Frigui W."/>
            <person name="Reysset G."/>
            <person name="Garnier T."/>
            <person name="Meurice G."/>
            <person name="Simon D."/>
            <person name="Bouchier C."/>
            <person name="Ma L."/>
            <person name="Tichit M."/>
            <person name="Porter J.L."/>
            <person name="Ryan J."/>
            <person name="Johnson P.D.R."/>
            <person name="Davies J.K."/>
            <person name="Jenkin G.A."/>
            <person name="Small P.L.C."/>
            <person name="Jones L.M."/>
            <person name="Tekaia F."/>
            <person name="Laval F."/>
            <person name="Daffe M."/>
            <person name="Parkhill J."/>
            <person name="Cole S.T."/>
        </authorList>
    </citation>
    <scope>NUCLEOTIDE SEQUENCE [LARGE SCALE GENOMIC DNA]</scope>
    <source>
        <strain>Agy99</strain>
    </source>
</reference>
<organism>
    <name type="scientific">Mycobacterium ulcerans (strain Agy99)</name>
    <dbReference type="NCBI Taxonomy" id="362242"/>
    <lineage>
        <taxon>Bacteria</taxon>
        <taxon>Bacillati</taxon>
        <taxon>Actinomycetota</taxon>
        <taxon>Actinomycetes</taxon>
        <taxon>Mycobacteriales</taxon>
        <taxon>Mycobacteriaceae</taxon>
        <taxon>Mycobacterium</taxon>
        <taxon>Mycobacterium ulcerans group</taxon>
    </lineage>
</organism>
<evidence type="ECO:0000255" key="1">
    <source>
        <dbReference type="HAMAP-Rule" id="MF_00323"/>
    </source>
</evidence>
<accession>A0PNU6</accession>
<protein>
    <recommendedName>
        <fullName evidence="1">Coproporphyrin III ferrochelatase</fullName>
        <ecNumber evidence="1">4.99.1.9</ecNumber>
    </recommendedName>
</protein>
<keyword id="KW-0963">Cytoplasm</keyword>
<keyword id="KW-0350">Heme biosynthesis</keyword>
<keyword id="KW-0408">Iron</keyword>
<keyword id="KW-0456">Lyase</keyword>
<keyword id="KW-0479">Metal-binding</keyword>
<keyword id="KW-0627">Porphyrin biosynthesis</keyword>
<comment type="function">
    <text evidence="1">Involved in coproporphyrin-dependent heme b biosynthesis. Catalyzes the insertion of ferrous iron into coproporphyrin III to form Fe-coproporphyrin III.</text>
</comment>
<comment type="catalytic activity">
    <reaction evidence="1">
        <text>Fe-coproporphyrin III + 2 H(+) = coproporphyrin III + Fe(2+)</text>
        <dbReference type="Rhea" id="RHEA:49572"/>
        <dbReference type="ChEBI" id="CHEBI:15378"/>
        <dbReference type="ChEBI" id="CHEBI:29033"/>
        <dbReference type="ChEBI" id="CHEBI:68438"/>
        <dbReference type="ChEBI" id="CHEBI:131725"/>
        <dbReference type="EC" id="4.99.1.9"/>
    </reaction>
    <physiologicalReaction direction="right-to-left" evidence="1">
        <dbReference type="Rhea" id="RHEA:49574"/>
    </physiologicalReaction>
</comment>
<comment type="pathway">
    <text evidence="1">Porphyrin-containing compound metabolism; protoheme biosynthesis.</text>
</comment>
<comment type="subcellular location">
    <subcellularLocation>
        <location evidence="1">Cytoplasm</location>
    </subcellularLocation>
</comment>
<comment type="similarity">
    <text evidence="1">Belongs to the ferrochelatase family.</text>
</comment>
<sequence length="340" mass="36357">MEFDAVLLLSFGGPEGPEQVRPFLENVTRGRGVPPERLDAVAEHYMHFGGVSPINGINRALVTELRAEVGLPVYFGNRNWEPYVEDTVMAMRDNGVKRAAVFATSAWSGYSGCTQYVEDIARARRAAGPDAPELVKLRSYFDHPLFVEMFADAIAAAAATVPKGARLVFTAHSIPVAADRRCGPGLYSRQVAYAASLVAAAAGYDDYDLAWQSRSGPPQVPWLEPDVADHLEMLRAGGVKAVIVCPIGFVADHIEVVWDLDAELRAQAQDAGIALARAATPNADRRFARLARGLIEELRSGGEPARVGGPDSVSGCLAGVNGEPCRPPHCAARETAPQGA</sequence>
<proteinExistence type="inferred from homology"/>
<name>CPFC_MYCUA</name>
<dbReference type="EC" id="4.99.1.9" evidence="1"/>
<dbReference type="EMBL" id="CP000325">
    <property type="protein sequence ID" value="ABL04015.1"/>
    <property type="molecule type" value="Genomic_DNA"/>
</dbReference>
<dbReference type="RefSeq" id="WP_011739635.1">
    <property type="nucleotide sequence ID" value="NC_008611.1"/>
</dbReference>
<dbReference type="SMR" id="A0PNU6"/>
<dbReference type="KEGG" id="mul:MUL_1493"/>
<dbReference type="eggNOG" id="COG0276">
    <property type="taxonomic scope" value="Bacteria"/>
</dbReference>
<dbReference type="HOGENOM" id="CLU_018884_2_0_11"/>
<dbReference type="UniPathway" id="UPA00252"/>
<dbReference type="Proteomes" id="UP000000765">
    <property type="component" value="Chromosome"/>
</dbReference>
<dbReference type="GO" id="GO:0005737">
    <property type="term" value="C:cytoplasm"/>
    <property type="evidence" value="ECO:0007669"/>
    <property type="project" value="UniProtKB-SubCell"/>
</dbReference>
<dbReference type="GO" id="GO:0004325">
    <property type="term" value="F:ferrochelatase activity"/>
    <property type="evidence" value="ECO:0007669"/>
    <property type="project" value="UniProtKB-UniRule"/>
</dbReference>
<dbReference type="GO" id="GO:0046872">
    <property type="term" value="F:metal ion binding"/>
    <property type="evidence" value="ECO:0007669"/>
    <property type="project" value="UniProtKB-KW"/>
</dbReference>
<dbReference type="GO" id="GO:0006783">
    <property type="term" value="P:heme biosynthetic process"/>
    <property type="evidence" value="ECO:0007669"/>
    <property type="project" value="UniProtKB-UniRule"/>
</dbReference>
<dbReference type="CDD" id="cd00419">
    <property type="entry name" value="Ferrochelatase_C"/>
    <property type="match status" value="1"/>
</dbReference>
<dbReference type="CDD" id="cd03411">
    <property type="entry name" value="Ferrochelatase_N"/>
    <property type="match status" value="1"/>
</dbReference>
<dbReference type="Gene3D" id="3.40.50.1400">
    <property type="match status" value="2"/>
</dbReference>
<dbReference type="HAMAP" id="MF_00323">
    <property type="entry name" value="Ferrochelatase"/>
    <property type="match status" value="1"/>
</dbReference>
<dbReference type="InterPro" id="IPR001015">
    <property type="entry name" value="Ferrochelatase"/>
</dbReference>
<dbReference type="InterPro" id="IPR019772">
    <property type="entry name" value="Ferrochelatase_AS"/>
</dbReference>
<dbReference type="InterPro" id="IPR033644">
    <property type="entry name" value="Ferrochelatase_C"/>
</dbReference>
<dbReference type="InterPro" id="IPR033659">
    <property type="entry name" value="Ferrochelatase_N"/>
</dbReference>
<dbReference type="NCBIfam" id="TIGR00109">
    <property type="entry name" value="hemH"/>
    <property type="match status" value="1"/>
</dbReference>
<dbReference type="NCBIfam" id="NF000689">
    <property type="entry name" value="PRK00035.2-1"/>
    <property type="match status" value="1"/>
</dbReference>
<dbReference type="PANTHER" id="PTHR11108">
    <property type="entry name" value="FERROCHELATASE"/>
    <property type="match status" value="1"/>
</dbReference>
<dbReference type="PANTHER" id="PTHR11108:SF1">
    <property type="entry name" value="FERROCHELATASE, MITOCHONDRIAL"/>
    <property type="match status" value="1"/>
</dbReference>
<dbReference type="Pfam" id="PF00762">
    <property type="entry name" value="Ferrochelatase"/>
    <property type="match status" value="1"/>
</dbReference>
<dbReference type="SUPFAM" id="SSF53800">
    <property type="entry name" value="Chelatase"/>
    <property type="match status" value="1"/>
</dbReference>
<dbReference type="PROSITE" id="PS00534">
    <property type="entry name" value="FERROCHELATASE"/>
    <property type="match status" value="1"/>
</dbReference>